<dbReference type="EMBL" id="AM942759">
    <property type="protein sequence ID" value="CAR40329.1"/>
    <property type="molecule type" value="Genomic_DNA"/>
</dbReference>
<dbReference type="RefSeq" id="WP_004245136.1">
    <property type="nucleotide sequence ID" value="NC_010554.1"/>
</dbReference>
<dbReference type="SMR" id="B4EU20"/>
<dbReference type="EnsemblBacteria" id="CAR40329">
    <property type="protein sequence ID" value="CAR40329"/>
    <property type="gene ID" value="PMI0083"/>
</dbReference>
<dbReference type="GeneID" id="6802409"/>
<dbReference type="KEGG" id="pmr:PMI0083"/>
<dbReference type="eggNOG" id="COG0781">
    <property type="taxonomic scope" value="Bacteria"/>
</dbReference>
<dbReference type="HOGENOM" id="CLU_087843_4_1_6"/>
<dbReference type="Proteomes" id="UP000008319">
    <property type="component" value="Chromosome"/>
</dbReference>
<dbReference type="GO" id="GO:0005829">
    <property type="term" value="C:cytosol"/>
    <property type="evidence" value="ECO:0007669"/>
    <property type="project" value="TreeGrafter"/>
</dbReference>
<dbReference type="GO" id="GO:0003723">
    <property type="term" value="F:RNA binding"/>
    <property type="evidence" value="ECO:0007669"/>
    <property type="project" value="UniProtKB-UniRule"/>
</dbReference>
<dbReference type="GO" id="GO:0006353">
    <property type="term" value="P:DNA-templated transcription termination"/>
    <property type="evidence" value="ECO:0007669"/>
    <property type="project" value="UniProtKB-UniRule"/>
</dbReference>
<dbReference type="GO" id="GO:0031564">
    <property type="term" value="P:transcription antitermination"/>
    <property type="evidence" value="ECO:0007669"/>
    <property type="project" value="UniProtKB-KW"/>
</dbReference>
<dbReference type="CDD" id="cd00619">
    <property type="entry name" value="Terminator_NusB"/>
    <property type="match status" value="1"/>
</dbReference>
<dbReference type="FunFam" id="1.10.940.10:FF:000001">
    <property type="entry name" value="Transcription antitermination factor NusB"/>
    <property type="match status" value="1"/>
</dbReference>
<dbReference type="Gene3D" id="1.10.940.10">
    <property type="entry name" value="NusB-like"/>
    <property type="match status" value="1"/>
</dbReference>
<dbReference type="HAMAP" id="MF_00073">
    <property type="entry name" value="NusB"/>
    <property type="match status" value="1"/>
</dbReference>
<dbReference type="InterPro" id="IPR035926">
    <property type="entry name" value="NusB-like_sf"/>
</dbReference>
<dbReference type="InterPro" id="IPR011605">
    <property type="entry name" value="NusB_fam"/>
</dbReference>
<dbReference type="InterPro" id="IPR006027">
    <property type="entry name" value="NusB_RsmB_TIM44"/>
</dbReference>
<dbReference type="NCBIfam" id="TIGR01951">
    <property type="entry name" value="nusB"/>
    <property type="match status" value="1"/>
</dbReference>
<dbReference type="PANTHER" id="PTHR11078:SF3">
    <property type="entry name" value="ANTITERMINATION NUSB DOMAIN-CONTAINING PROTEIN"/>
    <property type="match status" value="1"/>
</dbReference>
<dbReference type="PANTHER" id="PTHR11078">
    <property type="entry name" value="N UTILIZATION SUBSTANCE PROTEIN B-RELATED"/>
    <property type="match status" value="1"/>
</dbReference>
<dbReference type="Pfam" id="PF01029">
    <property type="entry name" value="NusB"/>
    <property type="match status" value="1"/>
</dbReference>
<dbReference type="SUPFAM" id="SSF48013">
    <property type="entry name" value="NusB-like"/>
    <property type="match status" value="1"/>
</dbReference>
<name>NUSB_PROMH</name>
<accession>B4EU20</accession>
<feature type="chain" id="PRO_1000092572" description="Transcription antitermination protein NusB">
    <location>
        <begin position="1"/>
        <end position="137"/>
    </location>
</feature>
<keyword id="KW-1185">Reference proteome</keyword>
<keyword id="KW-0694">RNA-binding</keyword>
<keyword id="KW-0804">Transcription</keyword>
<keyword id="KW-0889">Transcription antitermination</keyword>
<keyword id="KW-0805">Transcription regulation</keyword>
<comment type="function">
    <text evidence="1">Involved in transcription antitermination. Required for transcription of ribosomal RNA (rRNA) genes. Binds specifically to the boxA antiterminator sequence of the ribosomal RNA (rrn) operons.</text>
</comment>
<comment type="similarity">
    <text evidence="1">Belongs to the NusB family.</text>
</comment>
<evidence type="ECO:0000255" key="1">
    <source>
        <dbReference type="HAMAP-Rule" id="MF_00073"/>
    </source>
</evidence>
<sequence length="137" mass="15401">MKPAARRRARECAVQAIYSWQLSGNDIADVELEFLSEQDTQGVDIAYFRELLVGVAINAARLDKAMEPYLSRQLEELGQVEKAILRLAMFELSFREDVPYKVAINEAIELAKVFGADDSHKFVNGVLDKAAPTVRKK</sequence>
<organism>
    <name type="scientific">Proteus mirabilis (strain HI4320)</name>
    <dbReference type="NCBI Taxonomy" id="529507"/>
    <lineage>
        <taxon>Bacteria</taxon>
        <taxon>Pseudomonadati</taxon>
        <taxon>Pseudomonadota</taxon>
        <taxon>Gammaproteobacteria</taxon>
        <taxon>Enterobacterales</taxon>
        <taxon>Morganellaceae</taxon>
        <taxon>Proteus</taxon>
    </lineage>
</organism>
<proteinExistence type="inferred from homology"/>
<protein>
    <recommendedName>
        <fullName evidence="1">Transcription antitermination protein NusB</fullName>
    </recommendedName>
    <alternativeName>
        <fullName evidence="1">Antitermination factor NusB</fullName>
    </alternativeName>
</protein>
<gene>
    <name evidence="1" type="primary">nusB</name>
    <name type="ordered locus">PMI0083</name>
</gene>
<reference key="1">
    <citation type="journal article" date="2008" name="J. Bacteriol.">
        <title>Complete genome sequence of uropathogenic Proteus mirabilis, a master of both adherence and motility.</title>
        <authorList>
            <person name="Pearson M.M."/>
            <person name="Sebaihia M."/>
            <person name="Churcher C."/>
            <person name="Quail M.A."/>
            <person name="Seshasayee A.S."/>
            <person name="Luscombe N.M."/>
            <person name="Abdellah Z."/>
            <person name="Arrosmith C."/>
            <person name="Atkin B."/>
            <person name="Chillingworth T."/>
            <person name="Hauser H."/>
            <person name="Jagels K."/>
            <person name="Moule S."/>
            <person name="Mungall K."/>
            <person name="Norbertczak H."/>
            <person name="Rabbinowitsch E."/>
            <person name="Walker D."/>
            <person name="Whithead S."/>
            <person name="Thomson N.R."/>
            <person name="Rather P.N."/>
            <person name="Parkhill J."/>
            <person name="Mobley H.L.T."/>
        </authorList>
    </citation>
    <scope>NUCLEOTIDE SEQUENCE [LARGE SCALE GENOMIC DNA]</scope>
    <source>
        <strain>HI4320</strain>
    </source>
</reference>